<dbReference type="EMBL" id="BC134511">
    <property type="protein sequence ID" value="AAI34512.1"/>
    <property type="molecule type" value="mRNA"/>
</dbReference>
<dbReference type="RefSeq" id="NP_001077260.1">
    <property type="nucleotide sequence ID" value="NM_001083791.1"/>
</dbReference>
<dbReference type="SMR" id="A4IFC4"/>
<dbReference type="FunCoup" id="A4IFC4">
    <property type="interactions" value="771"/>
</dbReference>
<dbReference type="STRING" id="9913.ENSBTAP00000071949"/>
<dbReference type="Ensembl" id="ENSBTAT00000080755.1">
    <property type="protein sequence ID" value="ENSBTAP00000073496.1"/>
    <property type="gene ID" value="ENSBTAG00000055014.2"/>
</dbReference>
<dbReference type="GeneID" id="785404"/>
<dbReference type="KEGG" id="bta:785404"/>
<dbReference type="CTD" id="83699"/>
<dbReference type="VEuPathDB" id="HostDB:ENSBTAG00000055014"/>
<dbReference type="VGNC" id="VGNC:106923">
    <property type="gene designation" value="SH3BGRL2"/>
</dbReference>
<dbReference type="GeneTree" id="ENSGT00940000159157"/>
<dbReference type="InParanoid" id="A4IFC4"/>
<dbReference type="OMA" id="MYKNIPK"/>
<dbReference type="OrthoDB" id="9932926at2759"/>
<dbReference type="Proteomes" id="UP000009136">
    <property type="component" value="Chromosome 9"/>
</dbReference>
<dbReference type="Bgee" id="ENSBTAG00000055014">
    <property type="expression patterns" value="Expressed in corpus epididymis and 101 other cell types or tissues"/>
</dbReference>
<dbReference type="GO" id="GO:0005737">
    <property type="term" value="C:cytoplasm"/>
    <property type="evidence" value="ECO:0000318"/>
    <property type="project" value="GO_Central"/>
</dbReference>
<dbReference type="GO" id="GO:0005634">
    <property type="term" value="C:nucleus"/>
    <property type="evidence" value="ECO:0007669"/>
    <property type="project" value="UniProtKB-SubCell"/>
</dbReference>
<dbReference type="GO" id="GO:0017124">
    <property type="term" value="F:SH3 domain binding"/>
    <property type="evidence" value="ECO:0007669"/>
    <property type="project" value="UniProtKB-KW"/>
</dbReference>
<dbReference type="CDD" id="cd03030">
    <property type="entry name" value="GRX_SH3BGR"/>
    <property type="match status" value="1"/>
</dbReference>
<dbReference type="FunFam" id="3.40.30.10:FF:000065">
    <property type="entry name" value="SH3 domain-binding glutamic acid-rich-like protein"/>
    <property type="match status" value="1"/>
</dbReference>
<dbReference type="Gene3D" id="3.40.30.10">
    <property type="entry name" value="Glutaredoxin"/>
    <property type="match status" value="1"/>
</dbReference>
<dbReference type="InterPro" id="IPR006993">
    <property type="entry name" value="Glut_rich_SH3-bd"/>
</dbReference>
<dbReference type="InterPro" id="IPR051033">
    <property type="entry name" value="SH3BGR"/>
</dbReference>
<dbReference type="InterPro" id="IPR036249">
    <property type="entry name" value="Thioredoxin-like_sf"/>
</dbReference>
<dbReference type="PANTHER" id="PTHR12232">
    <property type="entry name" value="SH3 DOMAIN-BINDING GLUTAMIC ACID-RICH-LIKE PROTEIN"/>
    <property type="match status" value="1"/>
</dbReference>
<dbReference type="PANTHER" id="PTHR12232:SF4">
    <property type="entry name" value="SH3 DOMAIN-BINDING GLUTAMIC ACID-RICH-LIKE PROTEIN 2"/>
    <property type="match status" value="1"/>
</dbReference>
<dbReference type="Pfam" id="PF04908">
    <property type="entry name" value="SH3BGR"/>
    <property type="match status" value="1"/>
</dbReference>
<dbReference type="PIRSF" id="PIRSF008142">
    <property type="entry name" value="SH3-bind_E-rich_L"/>
    <property type="match status" value="1"/>
</dbReference>
<dbReference type="SUPFAM" id="SSF52833">
    <property type="entry name" value="Thioredoxin-like"/>
    <property type="match status" value="1"/>
</dbReference>
<sequence length="107" mass="12292">MVIRVFLASSSGFVAIKKKQQDVVRFLEANKIEFEEVDITMSEEQRQWMYKNIPPEKKPAQGNPLPPQIFNDDQYCGDYDSFFESKESNTVFSFLGLKSQLASKAES</sequence>
<proteinExistence type="inferred from homology"/>
<evidence type="ECO:0000250" key="1"/>
<evidence type="ECO:0000255" key="2"/>
<evidence type="ECO:0000305" key="3"/>
<protein>
    <recommendedName>
        <fullName>SH3 domain-binding glutamic acid-rich-like protein 2</fullName>
    </recommendedName>
</protein>
<gene>
    <name type="primary">SH3BGRL2</name>
</gene>
<reference key="1">
    <citation type="submission" date="2007-03" db="EMBL/GenBank/DDBJ databases">
        <authorList>
            <consortium name="NIH - Mammalian Gene Collection (MGC) project"/>
        </authorList>
    </citation>
    <scope>NUCLEOTIDE SEQUENCE [LARGE SCALE MRNA]</scope>
    <source>
        <strain>Hereford</strain>
        <tissue>Ascending colon</tissue>
    </source>
</reference>
<accession>A4IFC4</accession>
<keyword id="KW-0539">Nucleus</keyword>
<keyword id="KW-1185">Reference proteome</keyword>
<keyword id="KW-0729">SH3-binding</keyword>
<organism>
    <name type="scientific">Bos taurus</name>
    <name type="common">Bovine</name>
    <dbReference type="NCBI Taxonomy" id="9913"/>
    <lineage>
        <taxon>Eukaryota</taxon>
        <taxon>Metazoa</taxon>
        <taxon>Chordata</taxon>
        <taxon>Craniata</taxon>
        <taxon>Vertebrata</taxon>
        <taxon>Euteleostomi</taxon>
        <taxon>Mammalia</taxon>
        <taxon>Eutheria</taxon>
        <taxon>Laurasiatheria</taxon>
        <taxon>Artiodactyla</taxon>
        <taxon>Ruminantia</taxon>
        <taxon>Pecora</taxon>
        <taxon>Bovidae</taxon>
        <taxon>Bovinae</taxon>
        <taxon>Bos</taxon>
    </lineage>
</organism>
<name>SH3L2_BOVIN</name>
<feature type="chain" id="PRO_0000383686" description="SH3 domain-binding glutamic acid-rich-like protein 2">
    <location>
        <begin position="1"/>
        <end position="107"/>
    </location>
</feature>
<feature type="short sequence motif" description="SH3-binding" evidence="2">
    <location>
        <begin position="61"/>
        <end position="67"/>
    </location>
</feature>
<comment type="subcellular location">
    <subcellularLocation>
        <location evidence="1">Nucleus</location>
    </subcellularLocation>
</comment>
<comment type="similarity">
    <text evidence="3">Belongs to the SH3BGR family.</text>
</comment>